<sequence length="133" mass="15206">MPFKRFVEIGRVALINYGKDYGRLVVIVDVIDQTRALVDAPDMERSPINFKRLSLTDLKIDIKRVPKKKDLIKALEAADVKNKWAKSSWGRKLIVKKTRAALNDFDRFKIMLAKIKRAAGVRQELAKLKKTAA</sequence>
<keyword id="KW-0687">Ribonucleoprotein</keyword>
<keyword id="KW-0689">Ribosomal protein</keyword>
<evidence type="ECO:0000305" key="1"/>
<organism>
    <name type="scientific">Pisum sativum</name>
    <name type="common">Garden pea</name>
    <name type="synonym">Lathyrus oleraceus</name>
    <dbReference type="NCBI Taxonomy" id="3888"/>
    <lineage>
        <taxon>Eukaryota</taxon>
        <taxon>Viridiplantae</taxon>
        <taxon>Streptophyta</taxon>
        <taxon>Embryophyta</taxon>
        <taxon>Tracheophyta</taxon>
        <taxon>Spermatophyta</taxon>
        <taxon>Magnoliopsida</taxon>
        <taxon>eudicotyledons</taxon>
        <taxon>Gunneridae</taxon>
        <taxon>Pentapetalae</taxon>
        <taxon>rosids</taxon>
        <taxon>fabids</taxon>
        <taxon>Fabales</taxon>
        <taxon>Fabaceae</taxon>
        <taxon>Papilionoideae</taxon>
        <taxon>50 kb inversion clade</taxon>
        <taxon>NPAAA clade</taxon>
        <taxon>Hologalegina</taxon>
        <taxon>IRL clade</taxon>
        <taxon>Fabeae</taxon>
        <taxon>Pisum</taxon>
    </lineage>
</organism>
<dbReference type="EMBL" id="U78952">
    <property type="protein sequence ID" value="AAB97098.1"/>
    <property type="status" value="ALT_INIT"/>
    <property type="molecule type" value="mRNA"/>
</dbReference>
<dbReference type="PIR" id="T06789">
    <property type="entry name" value="T06789"/>
</dbReference>
<dbReference type="RefSeq" id="NP_001413754.1">
    <property type="nucleotide sequence ID" value="NM_001426825.1"/>
</dbReference>
<dbReference type="SMR" id="P55844"/>
<dbReference type="EnsemblPlants" id="Psat4g025000.1">
    <property type="protein sequence ID" value="Psat4g025000.1.cds"/>
    <property type="gene ID" value="Psat4g025000"/>
</dbReference>
<dbReference type="GeneID" id="127073251"/>
<dbReference type="Gramene" id="Psat4g025000.1">
    <property type="protein sequence ID" value="Psat4g025000.1.cds"/>
    <property type="gene ID" value="Psat4g025000"/>
</dbReference>
<dbReference type="OrthoDB" id="1875589at2759"/>
<dbReference type="GO" id="GO:0022625">
    <property type="term" value="C:cytosolic large ribosomal subunit"/>
    <property type="evidence" value="ECO:0007669"/>
    <property type="project" value="TreeGrafter"/>
</dbReference>
<dbReference type="GO" id="GO:0003723">
    <property type="term" value="F:RNA binding"/>
    <property type="evidence" value="ECO:0007669"/>
    <property type="project" value="InterPro"/>
</dbReference>
<dbReference type="GO" id="GO:0003735">
    <property type="term" value="F:structural constituent of ribosome"/>
    <property type="evidence" value="ECO:0007669"/>
    <property type="project" value="InterPro"/>
</dbReference>
<dbReference type="GO" id="GO:0042273">
    <property type="term" value="P:ribosomal large subunit biogenesis"/>
    <property type="evidence" value="ECO:0007669"/>
    <property type="project" value="TreeGrafter"/>
</dbReference>
<dbReference type="GO" id="GO:0006412">
    <property type="term" value="P:translation"/>
    <property type="evidence" value="ECO:0007669"/>
    <property type="project" value="InterPro"/>
</dbReference>
<dbReference type="CDD" id="cd23702">
    <property type="entry name" value="eL14"/>
    <property type="match status" value="1"/>
</dbReference>
<dbReference type="FunFam" id="2.30.30.30:FF:000026">
    <property type="entry name" value="60S ribosomal protein L14-1"/>
    <property type="match status" value="1"/>
</dbReference>
<dbReference type="Gene3D" id="2.30.30.30">
    <property type="match status" value="1"/>
</dbReference>
<dbReference type="Gene3D" id="6.10.250.2270">
    <property type="match status" value="1"/>
</dbReference>
<dbReference type="InterPro" id="IPR014722">
    <property type="entry name" value="Rib_uL2_dom2"/>
</dbReference>
<dbReference type="InterPro" id="IPR039660">
    <property type="entry name" value="Ribosomal_eL14"/>
</dbReference>
<dbReference type="InterPro" id="IPR002784">
    <property type="entry name" value="Ribosomal_eL14_dom"/>
</dbReference>
<dbReference type="InterPro" id="IPR008991">
    <property type="entry name" value="Translation_prot_SH3-like_sf"/>
</dbReference>
<dbReference type="PANTHER" id="PTHR11127">
    <property type="entry name" value="60S RIBOSOMAL PROTEIN L14"/>
    <property type="match status" value="1"/>
</dbReference>
<dbReference type="PANTHER" id="PTHR11127:SF2">
    <property type="entry name" value="LARGE RIBOSOMAL SUBUNIT PROTEIN EL14"/>
    <property type="match status" value="1"/>
</dbReference>
<dbReference type="Pfam" id="PF01929">
    <property type="entry name" value="Ribosomal_L14e"/>
    <property type="match status" value="1"/>
</dbReference>
<dbReference type="SUPFAM" id="SSF50104">
    <property type="entry name" value="Translation proteins SH3-like domain"/>
    <property type="match status" value="1"/>
</dbReference>
<proteinExistence type="evidence at transcript level"/>
<name>RL14_PEA</name>
<comment type="similarity">
    <text evidence="1">Belongs to the eukaryotic ribosomal protein eL14 family.</text>
</comment>
<comment type="sequence caution" evidence="1">
    <conflict type="erroneous initiation">
        <sequence resource="EMBL-CDS" id="AAB97098"/>
    </conflict>
    <text>Extended N-terminus.</text>
</comment>
<feature type="chain" id="PRO_0000132041" description="Large ribosomal subunit protein eL14">
    <location>
        <begin position="1"/>
        <end position="133"/>
    </location>
</feature>
<accession>P55844</accession>
<protein>
    <recommendedName>
        <fullName evidence="1">Large ribosomal subunit protein eL14</fullName>
    </recommendedName>
    <alternativeName>
        <fullName evidence="1">60S ribosomal protein L14</fullName>
    </alternativeName>
    <alternativeName>
        <fullName>Hydroxyproline-rich glycoprotein HRGP1</fullName>
    </alternativeName>
</protein>
<reference key="1">
    <citation type="submission" date="1996-12" db="EMBL/GenBank/DDBJ databases">
        <authorList>
            <person name="Woo H.H."/>
            <person name="Hawes M.C."/>
        </authorList>
    </citation>
    <scope>NUCLEOTIDE SEQUENCE [MRNA]</scope>
    <source>
        <tissue>Root</tissue>
    </source>
</reference>